<name>SCTB_SHIDY</name>
<gene>
    <name evidence="1" type="primary">sctB</name>
    <name evidence="3" type="synonym">ipaC</name>
</gene>
<geneLocation type="plasmid">
    <name>Invasion</name>
</geneLocation>
<proteinExistence type="inferred from homology"/>
<keyword id="KW-1043">Host membrane</keyword>
<keyword id="KW-0472">Membrane</keyword>
<keyword id="KW-0614">Plasmid</keyword>
<keyword id="KW-0964">Secreted</keyword>
<keyword id="KW-0812">Transmembrane</keyword>
<keyword id="KW-1133">Transmembrane helix</keyword>
<keyword id="KW-0843">Virulence</keyword>
<reference key="1">
    <citation type="journal article" date="1991" name="Mol. Microbiol.">
        <title>Nucleotide sequence of the ipaBCD structural genes of Shigella dysenteriae.</title>
        <authorList>
            <person name="Yao R."/>
            <person name="Palchaudhuri S."/>
        </authorList>
    </citation>
    <scope>NUCLEOTIDE SEQUENCE [GENOMIC DNA]</scope>
    <source>
        <strain>CG097</strain>
    </source>
</reference>
<comment type="function">
    <text evidence="1">Component of the type III secretion system (T3SS), also called injectisome, which is used to inject bacterial effector proteins into eukaryotic host cells (By similarity). IpaB/SctE and IpaC/SctB are inserted into the host membrane where they form a pore and allow the translocation of effector proteins into the cytosol of target cells (By similarity).</text>
</comment>
<comment type="subunit">
    <text evidence="1">The core secretion machinery of the T3SS is composed of approximately 20 different proteins, including cytoplasmic components, a base, an export apparatus and a needle (By similarity). This subunit is involved in the formation of a pore, called the translocon, in host membrane (By similarity).</text>
</comment>
<comment type="subcellular location">
    <subcellularLocation>
        <location evidence="1">Secreted</location>
    </subcellularLocation>
    <subcellularLocation>
        <location evidence="1">Host membrane</location>
        <topology evidence="2">Single-pass membrane protein</topology>
    </subcellularLocation>
    <text evidence="1">Secreted via the type III secretion system (T3SS) (By similarity). Localizes at needle tips (By similarity).</text>
</comment>
<comment type="similarity">
    <text evidence="4">Belongs to the SctB/SipC family.</text>
</comment>
<comment type="sequence caution" evidence="4">
    <conflict type="erroneous initiation">
        <sequence resource="EMBL-CDS" id="CAA43191"/>
    </conflict>
</comment>
<sequence length="363" mass="38836">MEIQNTKSTQILYTDISTKQTQSSSETQKSQNYQQIAAHIPLNVGKNPVLTTTLNDDQLLKLSEQVQHDSEIIARLTDKKMKDLSEMSHTLTPENTLDISSLSSNAVSLIISVAVLLSALRTAETKLGSQLSLIAFDATKSAAENIVRQGLAALSSSITGAVTQVGITGIGAKKTHSGISDQKGALRKNLATAQSLEKELAGSKLGLNKQIDTNITSPQTNSSTKFLGKNKLAPDNISLSTEHKTSLSSPDISLQDKIDTQRRTYELNTLSAQQKQNIGRATMETSAVAGNISTSGGRYASALEEEEQLISQASSKQAEEASQVSKEASQATNQLIQKLLNIIDNINQSRSSTASQIAGNIRA</sequence>
<protein>
    <recommendedName>
        <fullName evidence="4">Type 3 secretion system translocon protein SctB</fullName>
        <shortName evidence="4">T3SS translocon protein SctB</shortName>
    </recommendedName>
    <alternativeName>
        <fullName>42 kDa antigen</fullName>
    </alternativeName>
    <alternativeName>
        <fullName>Invasin IpaC</fullName>
    </alternativeName>
</protein>
<dbReference type="EMBL" id="X60777">
    <property type="protein sequence ID" value="CAA43191.1"/>
    <property type="status" value="ALT_INIT"/>
    <property type="molecule type" value="Genomic_DNA"/>
</dbReference>
<dbReference type="PIR" id="S15578">
    <property type="entry name" value="S15578"/>
</dbReference>
<dbReference type="SMR" id="Q03946"/>
<dbReference type="GO" id="GO:0005576">
    <property type="term" value="C:extracellular region"/>
    <property type="evidence" value="ECO:0007669"/>
    <property type="project" value="UniProtKB-SubCell"/>
</dbReference>
<dbReference type="GO" id="GO:0033644">
    <property type="term" value="C:host cell membrane"/>
    <property type="evidence" value="ECO:0007669"/>
    <property type="project" value="UniProtKB-SubCell"/>
</dbReference>
<dbReference type="GO" id="GO:0016020">
    <property type="term" value="C:membrane"/>
    <property type="evidence" value="ECO:0007669"/>
    <property type="project" value="UniProtKB-KW"/>
</dbReference>
<dbReference type="InterPro" id="IPR005427">
    <property type="entry name" value="BipC/SctB"/>
</dbReference>
<dbReference type="NCBIfam" id="TIGR02101">
    <property type="entry name" value="IpaC_SipC"/>
    <property type="match status" value="1"/>
</dbReference>
<dbReference type="NCBIfam" id="NF038055">
    <property type="entry name" value="T3SS_SctB_pilot"/>
    <property type="match status" value="1"/>
</dbReference>
<dbReference type="Pfam" id="PF09599">
    <property type="entry name" value="IpaC_SipC"/>
    <property type="match status" value="1"/>
</dbReference>
<dbReference type="PRINTS" id="PR01608">
    <property type="entry name" value="BACINVASINC"/>
</dbReference>
<accession>Q03946</accession>
<evidence type="ECO:0000250" key="1">
    <source>
        <dbReference type="UniProtKB" id="P18012"/>
    </source>
</evidence>
<evidence type="ECO:0000255" key="2"/>
<evidence type="ECO:0000303" key="3">
    <source>
    </source>
</evidence>
<evidence type="ECO:0000305" key="4"/>
<feature type="chain" id="PRO_0000219857" description="Type 3 secretion system translocon protein SctB">
    <location>
        <begin position="1"/>
        <end position="363"/>
    </location>
</feature>
<feature type="transmembrane region" description="Helical" evidence="2">
    <location>
        <begin position="99"/>
        <end position="120"/>
    </location>
</feature>
<organism>
    <name type="scientific">Shigella dysenteriae</name>
    <dbReference type="NCBI Taxonomy" id="622"/>
    <lineage>
        <taxon>Bacteria</taxon>
        <taxon>Pseudomonadati</taxon>
        <taxon>Pseudomonadota</taxon>
        <taxon>Gammaproteobacteria</taxon>
        <taxon>Enterobacterales</taxon>
        <taxon>Enterobacteriaceae</taxon>
        <taxon>Shigella</taxon>
    </lineage>
</organism>